<name>BMP10_HUMAN</name>
<sequence length="424" mass="48047">MGSLVLTLCALFCLAAYLVSGSPIMNLEQSPLEEDMSLFGDVFSEQDGVDFNTLLQSMKDEFLKTLNLSDIPTQDSAKVDPPEYMLELYNKFATDRTSMPSANIIRSFKNEDLFSQPVSFNGLRKYPLLFNVSIPHHEEVIMAELRLYTLVQRDRMIYDGVDRKITIFEVLESKGDNEGERNMLVLVSGEIYGTNSEWETFDVTDAIRRWQKSGSSTHQLEVHIESKHDEAEDASSGRLEIDTSAQNKHNPLLIVFSDDQSSDKERKEELNEMISHEQLPELDNLGLDSFSSGPGEEALLQMRSNIIYDSTARIRRNAKGNYCKRTPLYIDFKEIGWDSWIIAPPGYEAYECRGVCNYPLAEHLTPTKHAIIQALVHLKNSQKASKACCVPTKLEPISILYLDKGVVTYKFKYEGMAVSECGCR</sequence>
<gene>
    <name type="primary">BMP10</name>
</gene>
<feature type="signal peptide" evidence="3">
    <location>
        <begin position="1"/>
        <end position="21"/>
    </location>
</feature>
<feature type="propeptide" id="PRO_0000033888" evidence="3">
    <location>
        <begin position="22"/>
        <end position="316"/>
    </location>
</feature>
<feature type="chain" id="PRO_0000033889" description="Bone morphogenetic protein 10">
    <location>
        <begin position="317"/>
        <end position="424"/>
    </location>
</feature>
<feature type="glycosylation site" description="N-linked (GlcNAc...) asparagine" evidence="3">
    <location>
        <position position="67"/>
    </location>
</feature>
<feature type="glycosylation site" description="N-linked (GlcNAc...) asparagine" evidence="3">
    <location>
        <position position="131"/>
    </location>
</feature>
<feature type="disulfide bond" evidence="1">
    <location>
        <begin position="323"/>
        <end position="389"/>
    </location>
</feature>
<feature type="disulfide bond" evidence="1">
    <location>
        <begin position="352"/>
        <end position="421"/>
    </location>
</feature>
<feature type="disulfide bond" evidence="1">
    <location>
        <begin position="356"/>
        <end position="423"/>
    </location>
</feature>
<feature type="disulfide bond" description="Interchain" evidence="1">
    <location>
        <position position="388"/>
    </location>
</feature>
<feature type="sequence variant" id="VAR_089937" description="Found in a family with congenital heart defects; likely pathogenic; loss of function in BMP signaling pathway; contrary to the wild type, it is unable to stimulate gene expression from TBX20 and NKX2-5 promoters in a luciferase reporter assay." evidence="9">
    <location>
        <begin position="83"/>
        <end position="424"/>
    </location>
</feature>
<feature type="sequence variant" id="VAR_052572" description="In dbSNP:rs2231342.">
    <original>T</original>
    <variation>S</variation>
    <location>
        <position position="200"/>
    </location>
</feature>
<feature type="sequence variant" id="VAR_052573" description="In dbSNP:rs2231345.">
    <original>N</original>
    <variation>K</variation>
    <location>
        <position position="250"/>
    </location>
</feature>
<feature type="sequence conflict" description="In Ref. 3; AAH69080." evidence="10" ref="3">
    <original>A</original>
    <variation>T</variation>
    <location>
        <position position="143"/>
    </location>
</feature>
<feature type="strand" evidence="11">
    <location>
        <begin position="322"/>
        <end position="326"/>
    </location>
</feature>
<feature type="strand" evidence="11">
    <location>
        <begin position="329"/>
        <end position="331"/>
    </location>
</feature>
<feature type="turn" evidence="11">
    <location>
        <begin position="332"/>
        <end position="336"/>
    </location>
</feature>
<feature type="turn" evidence="11">
    <location>
        <begin position="338"/>
        <end position="340"/>
    </location>
</feature>
<feature type="strand" evidence="11">
    <location>
        <begin position="341"/>
        <end position="343"/>
    </location>
</feature>
<feature type="strand" evidence="11">
    <location>
        <begin position="345"/>
        <end position="348"/>
    </location>
</feature>
<feature type="strand" evidence="11">
    <location>
        <begin position="351"/>
        <end position="355"/>
    </location>
</feature>
<feature type="helix" evidence="11">
    <location>
        <begin position="362"/>
        <end position="364"/>
    </location>
</feature>
<feature type="helix" evidence="11">
    <location>
        <begin position="368"/>
        <end position="379"/>
    </location>
</feature>
<feature type="turn" evidence="11">
    <location>
        <begin position="381"/>
        <end position="383"/>
    </location>
</feature>
<feature type="strand" evidence="11">
    <location>
        <begin position="389"/>
        <end position="403"/>
    </location>
</feature>
<feature type="strand" evidence="11">
    <location>
        <begin position="406"/>
        <end position="423"/>
    </location>
</feature>
<proteinExistence type="evidence at protein level"/>
<comment type="function">
    <text evidence="4 5 7">Required for maintaining the proliferative activity of embryonic cardiomyocytes by preventing premature activation of the negative cell cycle regulator CDKN1C/p57KIP and maintaining the required expression levels of cardiogenic factors such as MEF2C and NKX2-5. Acts as a ligand for ACVRL1/ALK1, BMPR1A/ALK3 and BMPR1B/ALK6, leading to activation of SMAD1, SMAD5 and SMAD8 transcription factors. Inhibits endothelial cell migration and growth. May reduce cell migration and cell matrix adhesion in breast cancer cell lines.</text>
</comment>
<comment type="subunit">
    <text evidence="2 6 8">Homodimer; disulfide-linked (By similarity). Interacts with FBN1 (via N-terminal domain) and FBN2 (PubMed:18339631). Interacts with ENG (PubMed:21737454).</text>
</comment>
<comment type="interaction">
    <interactant intactId="EBI-3922513">
        <id>O95393</id>
    </interactant>
    <interactant intactId="EBI-3936819">
        <id>Q6Q788</id>
        <label>APOA5</label>
    </interactant>
    <organismsDiffer>false</organismsDiffer>
    <experiments>3</experiments>
</comment>
<comment type="interaction">
    <interactant intactId="EBI-3922513">
        <id>O95393</id>
    </interactant>
    <interactant intactId="EBI-13059134">
        <id>Q13520</id>
        <label>AQP6</label>
    </interactant>
    <organismsDiffer>false</organismsDiffer>
    <experiments>3</experiments>
</comment>
<comment type="interaction">
    <interactant intactId="EBI-3922513">
        <id>O95393</id>
    </interactant>
    <interactant intactId="EBI-11343438">
        <id>Q3SXY8</id>
        <label>ARL13B</label>
    </interactant>
    <organismsDiffer>false</organismsDiffer>
    <experiments>3</experiments>
</comment>
<comment type="interaction">
    <interactant intactId="EBI-3922513">
        <id>O95393</id>
    </interactant>
    <interactant intactId="EBI-700794">
        <id>Q13323</id>
        <label>BIK</label>
    </interactant>
    <organismsDiffer>false</organismsDiffer>
    <experiments>3</experiments>
</comment>
<comment type="interaction">
    <interactant intactId="EBI-3922513">
        <id>O95393</id>
    </interactant>
    <interactant intactId="EBI-11532900">
        <id>J3KQ12</id>
        <label>BSCL2</label>
    </interactant>
    <organismsDiffer>false</organismsDiffer>
    <experiments>3</experiments>
</comment>
<comment type="interaction">
    <interactant intactId="EBI-3922513">
        <id>O95393</id>
    </interactant>
    <interactant intactId="EBI-7996695">
        <id>Q8WZ55</id>
        <label>BSND</label>
    </interactant>
    <organismsDiffer>false</organismsDiffer>
    <experiments>3</experiments>
</comment>
<comment type="interaction">
    <interactant intactId="EBI-3922513">
        <id>O95393</id>
    </interactant>
    <interactant intactId="EBI-6873045">
        <id>Q6NSX1</id>
        <label>CCDC70</label>
    </interactant>
    <organismsDiffer>false</organismsDiffer>
    <experiments>3</experiments>
</comment>
<comment type="interaction">
    <interactant intactId="EBI-3922513">
        <id>O95393</id>
    </interactant>
    <interactant intactId="EBI-3906571">
        <id>P20138</id>
        <label>CD33</label>
    </interactant>
    <organismsDiffer>false</organismsDiffer>
    <experiments>3</experiments>
</comment>
<comment type="interaction">
    <interactant intactId="EBI-3922513">
        <id>O95393</id>
    </interactant>
    <interactant intactId="EBI-1045797">
        <id>Q8N5K1</id>
        <label>CISD2</label>
    </interactant>
    <organismsDiffer>false</organismsDiffer>
    <experiments>3</experiments>
</comment>
<comment type="interaction">
    <interactant intactId="EBI-3922513">
        <id>O95393</id>
    </interactant>
    <interactant intactId="EBI-740744">
        <id>O95471</id>
        <label>CLDN7</label>
    </interactant>
    <organismsDiffer>false</organismsDiffer>
    <experiments>3</experiments>
</comment>
<comment type="interaction">
    <interactant intactId="EBI-3922513">
        <id>O95393</id>
    </interactant>
    <interactant intactId="EBI-724524">
        <id>O75208</id>
        <label>COQ9</label>
    </interactant>
    <organismsDiffer>false</organismsDiffer>
    <experiments>3</experiments>
</comment>
<comment type="interaction">
    <interactant intactId="EBI-3922513">
        <id>O95393</id>
    </interactant>
    <interactant intactId="EBI-6942903">
        <id>Q96BA8</id>
        <label>CREB3L1</label>
    </interactant>
    <organismsDiffer>false</organismsDiffer>
    <experiments>3</experiments>
</comment>
<comment type="interaction">
    <interactant intactId="EBI-3922513">
        <id>O95393</id>
    </interactant>
    <interactant intactId="EBI-724515">
        <id>O95424</id>
        <label>DEXI</label>
    </interactant>
    <organismsDiffer>false</organismsDiffer>
    <experiments>3</experiments>
</comment>
<comment type="interaction">
    <interactant intactId="EBI-3922513">
        <id>O95393</id>
    </interactant>
    <interactant intactId="EBI-3915253">
        <id>Q15125</id>
        <label>EBP</label>
    </interactant>
    <organismsDiffer>false</organismsDiffer>
    <experiments>3</experiments>
</comment>
<comment type="interaction">
    <interactant intactId="EBI-3922513">
        <id>O95393</id>
    </interactant>
    <interactant intactId="EBI-946830">
        <id>P30040</id>
        <label>ERP29</label>
    </interactant>
    <organismsDiffer>false</organismsDiffer>
    <experiments>3</experiments>
</comment>
<comment type="interaction">
    <interactant intactId="EBI-3922513">
        <id>O95393</id>
    </interactant>
    <interactant intactId="EBI-18304435">
        <id>Q5JX71</id>
        <label>FAM209A</label>
    </interactant>
    <organismsDiffer>false</organismsDiffer>
    <experiments>3</experiments>
</comment>
<comment type="interaction">
    <interactant intactId="EBI-3922513">
        <id>O95393</id>
    </interactant>
    <interactant intactId="EBI-2869867">
        <id>P12314</id>
        <label>FCGR1A</label>
    </interactant>
    <organismsDiffer>false</organismsDiffer>
    <experiments>3</experiments>
</comment>
<comment type="interaction">
    <interactant intactId="EBI-3922513">
        <id>O95393</id>
    </interactant>
    <interactant intactId="EBI-4314687">
        <id>Q96PJ5</id>
        <label>FCRL4</label>
    </interactant>
    <organismsDiffer>false</organismsDiffer>
    <experiments>3</experiments>
</comment>
<comment type="interaction">
    <interactant intactId="EBI-3922513">
        <id>O95393</id>
    </interactant>
    <interactant intactId="EBI-2833872">
        <id>O15552</id>
        <label>FFAR2</label>
    </interactant>
    <organismsDiffer>false</organismsDiffer>
    <experiments>3</experiments>
</comment>
<comment type="interaction">
    <interactant intactId="EBI-3922513">
        <id>O95393</id>
    </interactant>
    <interactant intactId="EBI-3918971">
        <id>Q9Y680</id>
        <label>FKBP7</label>
    </interactant>
    <organismsDiffer>false</organismsDiffer>
    <experiments>3</experiments>
</comment>
<comment type="interaction">
    <interactant intactId="EBI-3922513">
        <id>O95393</id>
    </interactant>
    <interactant intactId="EBI-12142257">
        <id>Q8TBE3</id>
        <label>FNDC9</label>
    </interactant>
    <organismsDiffer>false</organismsDiffer>
    <experiments>3</experiments>
</comment>
<comment type="interaction">
    <interactant intactId="EBI-3922513">
        <id>O95393</id>
    </interactant>
    <interactant intactId="EBI-2868927">
        <id>Q6P531</id>
        <label>GGT6</label>
    </interactant>
    <organismsDiffer>false</organismsDiffer>
    <experiments>3</experiments>
</comment>
<comment type="interaction">
    <interactant intactId="EBI-3922513">
        <id>O95393</id>
    </interactant>
    <interactant intactId="EBI-17565645">
        <id>P08034</id>
        <label>GJB1</label>
    </interactant>
    <organismsDiffer>false</organismsDiffer>
    <experiments>3</experiments>
</comment>
<comment type="interaction">
    <interactant intactId="EBI-3922513">
        <id>O95393</id>
    </interactant>
    <interactant intactId="EBI-13345167">
        <id>Q8TDT2</id>
        <label>GPR152</label>
    </interactant>
    <organismsDiffer>false</organismsDiffer>
    <experiments>3</experiments>
</comment>
<comment type="interaction">
    <interactant intactId="EBI-3922513">
        <id>O95393</id>
    </interactant>
    <interactant intactId="EBI-11721746">
        <id>Q8TED1</id>
        <label>GPX8</label>
    </interactant>
    <organismsDiffer>false</organismsDiffer>
    <experiments>3</experiments>
</comment>
<comment type="interaction">
    <interactant intactId="EBI-3922513">
        <id>O95393</id>
    </interactant>
    <interactant intactId="EBI-1757512">
        <id>P26951</id>
        <label>IL3RA</label>
    </interactant>
    <organismsDiffer>false</organismsDiffer>
    <experiments>3</experiments>
</comment>
<comment type="interaction">
    <interactant intactId="EBI-3922513">
        <id>O95393</id>
    </interactant>
    <interactant intactId="EBI-10266796">
        <id>Q8N5M9</id>
        <label>JAGN1</label>
    </interactant>
    <organismsDiffer>false</organismsDiffer>
    <experiments>3</experiments>
</comment>
<comment type="interaction">
    <interactant intactId="EBI-3922513">
        <id>O95393</id>
    </interactant>
    <interactant intactId="EBI-8632435">
        <id>P43628</id>
        <label>KIR2DL3</label>
    </interactant>
    <organismsDiffer>false</organismsDiffer>
    <experiments>3</experiments>
</comment>
<comment type="interaction">
    <interactant intactId="EBI-3922513">
        <id>O95393</id>
    </interactant>
    <interactant intactId="EBI-3910993">
        <id>P43629</id>
        <label>KIR3DL1</label>
    </interactant>
    <organismsDiffer>false</organismsDiffer>
    <experiments>3</experiments>
</comment>
<comment type="interaction">
    <interactant intactId="EBI-3922513">
        <id>O95393</id>
    </interactant>
    <interactant intactId="EBI-9018187">
        <id>P26715</id>
        <label>KLRC1</label>
    </interactant>
    <organismsDiffer>false</organismsDiffer>
    <experiments>3</experiments>
</comment>
<comment type="interaction">
    <interactant intactId="EBI-3922513">
        <id>O95393</id>
    </interactant>
    <interactant intactId="EBI-11304917">
        <id>Q8N386</id>
        <label>LRRC25</label>
    </interactant>
    <organismsDiffer>false</organismsDiffer>
    <experiments>3</experiments>
</comment>
<comment type="interaction">
    <interactant intactId="EBI-3922513">
        <id>O95393</id>
    </interactant>
    <interactant intactId="EBI-3925442">
        <id>Q9HCJ2</id>
        <label>LRRC4C</label>
    </interactant>
    <organismsDiffer>false</organismsDiffer>
    <experiments>3</experiments>
</comment>
<comment type="interaction">
    <interactant intactId="EBI-3922513">
        <id>O95393</id>
    </interactant>
    <interactant intactId="EBI-724754">
        <id>O14880</id>
        <label>MGST3</label>
    </interactant>
    <organismsDiffer>false</organismsDiffer>
    <experiments>3</experiments>
</comment>
<comment type="interaction">
    <interactant intactId="EBI-3922513">
        <id>O95393</id>
    </interactant>
    <interactant intactId="EBI-750085">
        <id>Q9Y676</id>
        <label>MRPS18B</label>
    </interactant>
    <organismsDiffer>false</organismsDiffer>
    <experiments>3</experiments>
</comment>
<comment type="interaction">
    <interactant intactId="EBI-3922513">
        <id>O95393</id>
    </interactant>
    <interactant intactId="EBI-12806656">
        <id>Q96HJ5</id>
        <label>MS4A3</label>
    </interactant>
    <organismsDiffer>false</organismsDiffer>
    <experiments>3</experiments>
</comment>
<comment type="interaction">
    <interactant intactId="EBI-3922513">
        <id>O95393</id>
    </interactant>
    <interactant intactId="EBI-3923617">
        <id>Q9H2K0</id>
        <label>MTIF3</label>
    </interactant>
    <organismsDiffer>false</organismsDiffer>
    <experiments>3</experiments>
</comment>
<comment type="interaction">
    <interactant intactId="EBI-3922513">
        <id>O95393</id>
    </interactant>
    <interactant intactId="EBI-10485931">
        <id>Q5VZY2</id>
        <label>PLPP4</label>
    </interactant>
    <organismsDiffer>false</organismsDiffer>
    <experiments>3</experiments>
</comment>
<comment type="interaction">
    <interactant intactId="EBI-3922513">
        <id>O95393</id>
    </interactant>
    <interactant intactId="EBI-7545592">
        <id>Q9H6H4</id>
        <label>REEP4</label>
    </interactant>
    <organismsDiffer>false</organismsDiffer>
    <experiments>3</experiments>
</comment>
<comment type="interaction">
    <interactant intactId="EBI-3922513">
        <id>O95393</id>
    </interactant>
    <interactant intactId="EBI-6977215">
        <id>Q9Y3P8</id>
        <label>SIT1</label>
    </interactant>
    <organismsDiffer>false</organismsDiffer>
    <experiments>3</experiments>
</comment>
<comment type="interaction">
    <interactant intactId="EBI-3922513">
        <id>O95393</id>
    </interactant>
    <interactant intactId="EBI-3923031">
        <id>Q14973</id>
        <label>SLC10A1</label>
    </interactant>
    <organismsDiffer>false</organismsDiffer>
    <experiments>3</experiments>
</comment>
<comment type="interaction">
    <interactant intactId="EBI-3922513">
        <id>O95393</id>
    </interactant>
    <interactant intactId="EBI-18159983">
        <id>Q3KNW5</id>
        <label>SLC10A6</label>
    </interactant>
    <organismsDiffer>false</organismsDiffer>
    <experiments>3</experiments>
</comment>
<comment type="interaction">
    <interactant intactId="EBI-3922513">
        <id>O95393</id>
    </interactant>
    <interactant intactId="EBI-17295964">
        <id>Q9NQQ7-3</id>
        <label>SLC35C2</label>
    </interactant>
    <organismsDiffer>false</organismsDiffer>
    <experiments>3</experiments>
</comment>
<comment type="interaction">
    <interactant intactId="EBI-3922513">
        <id>O95393</id>
    </interactant>
    <interactant intactId="EBI-9978441">
        <id>Q9H2H9</id>
        <label>SLC38A1</label>
    </interactant>
    <organismsDiffer>false</organismsDiffer>
    <experiments>3</experiments>
</comment>
<comment type="interaction">
    <interactant intactId="EBI-3922513">
        <id>O95393</id>
    </interactant>
    <interactant intactId="EBI-7576138">
        <id>P02730</id>
        <label>SLC4A1</label>
    </interactant>
    <organismsDiffer>false</organismsDiffer>
    <experiments>3</experiments>
</comment>
<comment type="interaction">
    <interactant intactId="EBI-3922513">
        <id>O95393</id>
    </interactant>
    <interactant intactId="EBI-10819434">
        <id>Q9NPE6</id>
        <label>SPAG4</label>
    </interactant>
    <organismsDiffer>false</organismsDiffer>
    <experiments>3</experiments>
</comment>
<comment type="interaction">
    <interactant intactId="EBI-3922513">
        <id>O95393</id>
    </interactant>
    <interactant intactId="EBI-6447595">
        <id>P57738</id>
        <label>TCTA</label>
    </interactant>
    <organismsDiffer>false</organismsDiffer>
    <experiments>3</experiments>
</comment>
<comment type="interaction">
    <interactant intactId="EBI-3922513">
        <id>O95393</id>
    </interactant>
    <interactant intactId="EBI-8638294">
        <id>Q9NUH8</id>
        <label>TMEM14B</label>
    </interactant>
    <organismsDiffer>false</organismsDiffer>
    <experiments>3</experiments>
</comment>
<comment type="interaction">
    <interactant intactId="EBI-3922513">
        <id>O95393</id>
    </interactant>
    <interactant intactId="EBI-3923061">
        <id>Q96B21</id>
        <label>TMEM45B</label>
    </interactant>
    <organismsDiffer>false</organismsDiffer>
    <experiments>3</experiments>
</comment>
<comment type="interaction">
    <interactant intactId="EBI-3922513">
        <id>O95393</id>
    </interactant>
    <interactant intactId="EBI-2548832">
        <id>Q8N661</id>
        <label>TMEM86B</label>
    </interactant>
    <organismsDiffer>false</organismsDiffer>
    <experiments>3</experiments>
</comment>
<comment type="interaction">
    <interactant intactId="EBI-3922513">
        <id>O95393</id>
    </interactant>
    <interactant intactId="EBI-12345267">
        <id>O15393-2</id>
        <label>TMPRSS2</label>
    </interactant>
    <organismsDiffer>false</organismsDiffer>
    <experiments>3</experiments>
</comment>
<comment type="interaction">
    <interactant intactId="EBI-3922513">
        <id>O95393</id>
    </interactant>
    <interactant intactId="EBI-524131">
        <id>O43557</id>
        <label>TNFSF14</label>
    </interactant>
    <organismsDiffer>false</organismsDiffer>
    <experiments>3</experiments>
</comment>
<comment type="interaction">
    <interactant intactId="EBI-3922513">
        <id>O95393</id>
    </interactant>
    <interactant intactId="EBI-13076860">
        <id>P32971</id>
        <label>TNFSF8</label>
    </interactant>
    <organismsDiffer>false</organismsDiffer>
    <experiments>3</experiments>
</comment>
<comment type="interaction">
    <interactant intactId="EBI-3922513">
        <id>O95393</id>
    </interactant>
    <interactant intactId="EBI-17678331">
        <id>Q12999</id>
        <label>TSPAN31</label>
    </interactant>
    <organismsDiffer>false</organismsDiffer>
    <experiments>3</experiments>
</comment>
<comment type="interaction">
    <interactant intactId="EBI-3922513">
        <id>O95393</id>
    </interactant>
    <interactant intactId="EBI-744988">
        <id>Q9H7M9</id>
        <label>VSIR</label>
    </interactant>
    <organismsDiffer>false</organismsDiffer>
    <experiments>3</experiments>
</comment>
<comment type="subcellular location">
    <subcellularLocation>
        <location evidence="1">Secreted</location>
    </subcellularLocation>
</comment>
<comment type="tissue specificity">
    <text evidence="7">Detected in mammary epithelia (at protein level).</text>
</comment>
<comment type="induction">
    <text evidence="7">Down-regulated in some breast cancer subtypes and breast cancer cell lines.</text>
</comment>
<comment type="disease">
    <text evidence="9">Defects in BMP10 may be a cause of congenital heart defects, a wide spectrum of cardiovascular malformations resulting from anomalous development of the heart, cardiac valves, and endo-thoracic large vessels.</text>
</comment>
<comment type="similarity">
    <text evidence="10">Belongs to the TGF-beta family.</text>
</comment>
<comment type="online information" name="Wikipedia">
    <link uri="https://en.wikipedia.org/wiki/Bone_morphogenetic_protein_10"/>
    <text>Bone morphogenetic protein 10 entry</text>
</comment>
<evidence type="ECO:0000250" key="1"/>
<evidence type="ECO:0000250" key="2">
    <source>
        <dbReference type="UniProtKB" id="P12643"/>
    </source>
</evidence>
<evidence type="ECO:0000255" key="3"/>
<evidence type="ECO:0000269" key="4">
    <source>
    </source>
</evidence>
<evidence type="ECO:0000269" key="5">
    <source>
    </source>
</evidence>
<evidence type="ECO:0000269" key="6">
    <source>
    </source>
</evidence>
<evidence type="ECO:0000269" key="7">
    <source>
    </source>
</evidence>
<evidence type="ECO:0000269" key="8">
    <source>
    </source>
</evidence>
<evidence type="ECO:0000269" key="9">
    <source>
    </source>
</evidence>
<evidence type="ECO:0000305" key="10"/>
<evidence type="ECO:0007829" key="11">
    <source>
        <dbReference type="PDB" id="7PPA"/>
    </source>
</evidence>
<keyword id="KW-0002">3D-structure</keyword>
<keyword id="KW-0130">Cell adhesion</keyword>
<keyword id="KW-0165">Cleavage on pair of basic residues</keyword>
<keyword id="KW-0202">Cytokine</keyword>
<keyword id="KW-0217">Developmental protein</keyword>
<keyword id="KW-0225">Disease variant</keyword>
<keyword id="KW-1015">Disulfide bond</keyword>
<keyword id="KW-0325">Glycoprotein</keyword>
<keyword id="KW-0339">Growth factor</keyword>
<keyword id="KW-1267">Proteomics identification</keyword>
<keyword id="KW-1185">Reference proteome</keyword>
<keyword id="KW-0964">Secreted</keyword>
<keyword id="KW-0732">Signal</keyword>
<reference key="1">
    <citation type="submission" date="1998-10" db="EMBL/GenBank/DDBJ databases">
        <title>Homo sapiens bone morphogenetic protein 10 (BMP-10) mRNA.</title>
        <authorList>
            <person name="Celeste A.J."/>
        </authorList>
    </citation>
    <scope>NUCLEOTIDE SEQUENCE [MRNA]</scope>
</reference>
<reference key="2">
    <citation type="journal article" date="2005" name="Nature">
        <title>Generation and annotation of the DNA sequences of human chromosomes 2 and 4.</title>
        <authorList>
            <person name="Hillier L.W."/>
            <person name="Graves T.A."/>
            <person name="Fulton R.S."/>
            <person name="Fulton L.A."/>
            <person name="Pepin K.H."/>
            <person name="Minx P."/>
            <person name="Wagner-McPherson C."/>
            <person name="Layman D."/>
            <person name="Wylie K."/>
            <person name="Sekhon M."/>
            <person name="Becker M.C."/>
            <person name="Fewell G.A."/>
            <person name="Delehaunty K.D."/>
            <person name="Miner T.L."/>
            <person name="Nash W.E."/>
            <person name="Kremitzki C."/>
            <person name="Oddy L."/>
            <person name="Du H."/>
            <person name="Sun H."/>
            <person name="Bradshaw-Cordum H."/>
            <person name="Ali J."/>
            <person name="Carter J."/>
            <person name="Cordes M."/>
            <person name="Harris A."/>
            <person name="Isak A."/>
            <person name="van Brunt A."/>
            <person name="Nguyen C."/>
            <person name="Du F."/>
            <person name="Courtney L."/>
            <person name="Kalicki J."/>
            <person name="Ozersky P."/>
            <person name="Abbott S."/>
            <person name="Armstrong J."/>
            <person name="Belter E.A."/>
            <person name="Caruso L."/>
            <person name="Cedroni M."/>
            <person name="Cotton M."/>
            <person name="Davidson T."/>
            <person name="Desai A."/>
            <person name="Elliott G."/>
            <person name="Erb T."/>
            <person name="Fronick C."/>
            <person name="Gaige T."/>
            <person name="Haakenson W."/>
            <person name="Haglund K."/>
            <person name="Holmes A."/>
            <person name="Harkins R."/>
            <person name="Kim K."/>
            <person name="Kruchowski S.S."/>
            <person name="Strong C.M."/>
            <person name="Grewal N."/>
            <person name="Goyea E."/>
            <person name="Hou S."/>
            <person name="Levy A."/>
            <person name="Martinka S."/>
            <person name="Mead K."/>
            <person name="McLellan M.D."/>
            <person name="Meyer R."/>
            <person name="Randall-Maher J."/>
            <person name="Tomlinson C."/>
            <person name="Dauphin-Kohlberg S."/>
            <person name="Kozlowicz-Reilly A."/>
            <person name="Shah N."/>
            <person name="Swearengen-Shahid S."/>
            <person name="Snider J."/>
            <person name="Strong J.T."/>
            <person name="Thompson J."/>
            <person name="Yoakum M."/>
            <person name="Leonard S."/>
            <person name="Pearman C."/>
            <person name="Trani L."/>
            <person name="Radionenko M."/>
            <person name="Waligorski J.E."/>
            <person name="Wang C."/>
            <person name="Rock S.M."/>
            <person name="Tin-Wollam A.-M."/>
            <person name="Maupin R."/>
            <person name="Latreille P."/>
            <person name="Wendl M.C."/>
            <person name="Yang S.-P."/>
            <person name="Pohl C."/>
            <person name="Wallis J.W."/>
            <person name="Spieth J."/>
            <person name="Bieri T.A."/>
            <person name="Berkowicz N."/>
            <person name="Nelson J.O."/>
            <person name="Osborne J."/>
            <person name="Ding L."/>
            <person name="Meyer R."/>
            <person name="Sabo A."/>
            <person name="Shotland Y."/>
            <person name="Sinha P."/>
            <person name="Wohldmann P.E."/>
            <person name="Cook L.L."/>
            <person name="Hickenbotham M.T."/>
            <person name="Eldred J."/>
            <person name="Williams D."/>
            <person name="Jones T.A."/>
            <person name="She X."/>
            <person name="Ciccarelli F.D."/>
            <person name="Izaurralde E."/>
            <person name="Taylor J."/>
            <person name="Schmutz J."/>
            <person name="Myers R.M."/>
            <person name="Cox D.R."/>
            <person name="Huang X."/>
            <person name="McPherson J.D."/>
            <person name="Mardis E.R."/>
            <person name="Clifton S.W."/>
            <person name="Warren W.C."/>
            <person name="Chinwalla A.T."/>
            <person name="Eddy S.R."/>
            <person name="Marra M.A."/>
            <person name="Ovcharenko I."/>
            <person name="Furey T.S."/>
            <person name="Miller W."/>
            <person name="Eichler E.E."/>
            <person name="Bork P."/>
            <person name="Suyama M."/>
            <person name="Torrents D."/>
            <person name="Waterston R.H."/>
            <person name="Wilson R.K."/>
        </authorList>
    </citation>
    <scope>NUCLEOTIDE SEQUENCE [LARGE SCALE GENOMIC DNA]</scope>
</reference>
<reference key="3">
    <citation type="journal article" date="2004" name="Genome Res.">
        <title>The status, quality, and expansion of the NIH full-length cDNA project: the Mammalian Gene Collection (MGC).</title>
        <authorList>
            <consortium name="The MGC Project Team"/>
        </authorList>
    </citation>
    <scope>NUCLEOTIDE SEQUENCE [LARGE SCALE MRNA]</scope>
    <source>
        <tissue>Cerebellum</tissue>
    </source>
</reference>
<reference key="4">
    <citation type="journal article" date="2005" name="J. Biol. Chem.">
        <title>Identification of receptors and signaling pathways for orphan bone morphogenetic protein/growth differentiation factor ligands based on genomic analyses.</title>
        <authorList>
            <person name="Mazerbourg S."/>
            <person name="Sangkuhl K."/>
            <person name="Luo C.-W."/>
            <person name="Sudo S."/>
            <person name="Klein C."/>
            <person name="Hsueh A.J.W."/>
        </authorList>
    </citation>
    <scope>FUNCTION</scope>
</reference>
<reference key="5">
    <citation type="journal article" date="2007" name="Blood">
        <title>Identification of BMP9 and BMP10 as functional activators of the orphan activin receptor-like kinase 1 (ALK1) in endothelial cells.</title>
        <authorList>
            <person name="David L."/>
            <person name="Mallet C."/>
            <person name="Mazerbourg S."/>
            <person name="Feige J.-J."/>
            <person name="Bailly S."/>
        </authorList>
    </citation>
    <scope>FUNCTION</scope>
</reference>
<reference key="6">
    <citation type="journal article" date="2008" name="J. Biol. Chem.">
        <title>Targeting of bone morphogenetic protein growth factor complexes to fibrillin.</title>
        <authorList>
            <person name="Sengle G."/>
            <person name="Charbonneau N.L."/>
            <person name="Ono R.N."/>
            <person name="Sasaki T."/>
            <person name="Alvarez J."/>
            <person name="Keene D.R."/>
            <person name="Baechinger H.P."/>
            <person name="Sakai L.Y."/>
        </authorList>
    </citation>
    <scope>INTERACTION WITH FBN1 AND FBN2</scope>
</reference>
<reference key="7">
    <citation type="journal article" date="2011" name="J. Biol. Chem.">
        <title>Soluble endoglin specifically binds bone morphogenetic proteins 9 and 10 via its orphan domain, inhibits blood vessel formation, and suppresses tumor growth.</title>
        <authorList>
            <person name="Castonguay R."/>
            <person name="Werner E.D."/>
            <person name="Matthews R.G."/>
            <person name="Presman E."/>
            <person name="Mulivor A.W."/>
            <person name="Solban N."/>
            <person name="Sako D."/>
            <person name="Pearsall R.S."/>
            <person name="Underwood K.W."/>
            <person name="Seehra J."/>
            <person name="Kumar R."/>
            <person name="Grinberg A.V."/>
        </authorList>
    </citation>
    <scope>INTERACTION WITH ENG</scope>
</reference>
<reference key="8">
    <citation type="journal article" date="2010" name="Cancer Sci.">
        <title>Bone morphogenetic protein-10 (BMP-10) inhibits aggressiveness of breast cancer cells and correlates with poor prognosis in breast cancer.</title>
        <authorList>
            <person name="Ye L."/>
            <person name="Bokobza S."/>
            <person name="Li J."/>
            <person name="Moazzam M."/>
            <person name="Chen J."/>
            <person name="Mansel R.E."/>
            <person name="Jiang W.G."/>
        </authorList>
    </citation>
    <scope>FUNCTION</scope>
    <scope>TISSUE SPECIFICITY</scope>
    <scope>INDUCTION</scope>
</reference>
<reference key="9">
    <citation type="journal article" date="2024" name="Am. J. Transl. Res.">
        <title>Discovery of BMP10 as a new gene underpinning congenital heart defects.</title>
        <authorList>
            <person name="Dong B.B."/>
            <person name="Li Y.J."/>
            <person name="Liu X.Y."/>
            <person name="Huang R.T."/>
            <person name="Yang C.X."/>
            <person name="Xu Y.J."/>
            <person name="Lv H.T."/>
            <person name="Yang Y.Q."/>
        </authorList>
    </citation>
    <scope>VARIANT 83-GLU--ARG-424 DEL</scope>
    <scope>CHARACTERIZATION OF VARIANT 83-GLU--ARG-424 DEL</scope>
    <scope>INVOLVEMENT IN CONGENITAL HEART DEFECTS</scope>
</reference>
<protein>
    <recommendedName>
        <fullName>Bone morphogenetic protein 10</fullName>
        <shortName>BMP-10</shortName>
    </recommendedName>
</protein>
<dbReference type="EMBL" id="AF101441">
    <property type="protein sequence ID" value="AAC77462.1"/>
    <property type="molecule type" value="mRNA"/>
</dbReference>
<dbReference type="EMBL" id="AC097495">
    <property type="protein sequence ID" value="AAY15075.1"/>
    <property type="molecule type" value="Genomic_DNA"/>
</dbReference>
<dbReference type="EMBL" id="BC069080">
    <property type="protein sequence ID" value="AAH69080.1"/>
    <property type="molecule type" value="mRNA"/>
</dbReference>
<dbReference type="EMBL" id="BC101734">
    <property type="protein sequence ID" value="AAI01735.1"/>
    <property type="molecule type" value="mRNA"/>
</dbReference>
<dbReference type="EMBL" id="BC105063">
    <property type="protein sequence ID" value="AAI05064.1"/>
    <property type="molecule type" value="mRNA"/>
</dbReference>
<dbReference type="CCDS" id="CCDS1890.1"/>
<dbReference type="RefSeq" id="NP_055297.1">
    <property type="nucleotide sequence ID" value="NM_014482.3"/>
</dbReference>
<dbReference type="PDB" id="6SF1">
    <property type="method" value="X-ray"/>
    <property type="resolution" value="2.80 A"/>
    <property type="chains" value="B=317-424"/>
</dbReference>
<dbReference type="PDB" id="6SF3">
    <property type="method" value="X-ray"/>
    <property type="resolution" value="2.30 A"/>
    <property type="chains" value="B=317-424"/>
</dbReference>
<dbReference type="PDB" id="7PPA">
    <property type="method" value="X-ray"/>
    <property type="resolution" value="1.48 A"/>
    <property type="chains" value="A/B=317-424"/>
</dbReference>
<dbReference type="PDB" id="7PPB">
    <property type="method" value="X-ray"/>
    <property type="resolution" value="2.40 A"/>
    <property type="chains" value="A=317-424"/>
</dbReference>
<dbReference type="PDB" id="7PPC">
    <property type="method" value="X-ray"/>
    <property type="resolution" value="3.60 A"/>
    <property type="chains" value="A/B/C/D=317-424"/>
</dbReference>
<dbReference type="PDB" id="9DPY">
    <property type="method" value="X-ray"/>
    <property type="resolution" value="1.77 A"/>
    <property type="chains" value="A/B=320-424"/>
</dbReference>
<dbReference type="PDBsum" id="6SF1"/>
<dbReference type="PDBsum" id="6SF3"/>
<dbReference type="PDBsum" id="7PPA"/>
<dbReference type="PDBsum" id="7PPB"/>
<dbReference type="PDBsum" id="7PPC"/>
<dbReference type="PDBsum" id="9DPY"/>
<dbReference type="SMR" id="O95393"/>
<dbReference type="BioGRID" id="118125">
    <property type="interactions" value="61"/>
</dbReference>
<dbReference type="FunCoup" id="O95393">
    <property type="interactions" value="330"/>
</dbReference>
<dbReference type="IntAct" id="O95393">
    <property type="interactions" value="55"/>
</dbReference>
<dbReference type="STRING" id="9606.ENSP00000295379"/>
<dbReference type="BindingDB" id="O95393"/>
<dbReference type="ChEMBL" id="CHEMBL3713453"/>
<dbReference type="GlyCosmos" id="O95393">
    <property type="glycosylation" value="2 sites, No reported glycans"/>
</dbReference>
<dbReference type="GlyGen" id="O95393">
    <property type="glycosylation" value="2 sites"/>
</dbReference>
<dbReference type="iPTMnet" id="O95393"/>
<dbReference type="PhosphoSitePlus" id="O95393"/>
<dbReference type="BioMuta" id="BMP10"/>
<dbReference type="jPOST" id="O95393"/>
<dbReference type="MassIVE" id="O95393"/>
<dbReference type="PaxDb" id="9606-ENSP00000295379"/>
<dbReference type="PeptideAtlas" id="O95393"/>
<dbReference type="ProteomicsDB" id="50844"/>
<dbReference type="Antibodypedia" id="16182">
    <property type="antibodies" value="394 antibodies from 37 providers"/>
</dbReference>
<dbReference type="DNASU" id="27302"/>
<dbReference type="Ensembl" id="ENST00000295379.2">
    <property type="protein sequence ID" value="ENSP00000295379.1"/>
    <property type="gene ID" value="ENSG00000163217.2"/>
</dbReference>
<dbReference type="GeneID" id="27302"/>
<dbReference type="KEGG" id="hsa:27302"/>
<dbReference type="MANE-Select" id="ENST00000295379.2">
    <property type="protein sequence ID" value="ENSP00000295379.1"/>
    <property type="RefSeq nucleotide sequence ID" value="NM_014482.3"/>
    <property type="RefSeq protein sequence ID" value="NP_055297.1"/>
</dbReference>
<dbReference type="UCSC" id="uc002sez.1">
    <property type="organism name" value="human"/>
</dbReference>
<dbReference type="AGR" id="HGNC:20869"/>
<dbReference type="CTD" id="27302"/>
<dbReference type="DisGeNET" id="27302"/>
<dbReference type="GeneCards" id="BMP10"/>
<dbReference type="HGNC" id="HGNC:20869">
    <property type="gene designation" value="BMP10"/>
</dbReference>
<dbReference type="HPA" id="ENSG00000163217">
    <property type="expression patterns" value="Tissue enriched (heart)"/>
</dbReference>
<dbReference type="MIM" id="608748">
    <property type="type" value="gene"/>
</dbReference>
<dbReference type="neXtProt" id="NX_O95393"/>
<dbReference type="OpenTargets" id="ENSG00000163217"/>
<dbReference type="PharmGKB" id="PA134953092"/>
<dbReference type="VEuPathDB" id="HostDB:ENSG00000163217"/>
<dbReference type="eggNOG" id="KOG3900">
    <property type="taxonomic scope" value="Eukaryota"/>
</dbReference>
<dbReference type="GeneTree" id="ENSGT00940000156279"/>
<dbReference type="HOGENOM" id="CLU_020515_2_0_1"/>
<dbReference type="InParanoid" id="O95393"/>
<dbReference type="OMA" id="DNEWKTF"/>
<dbReference type="OrthoDB" id="5987191at2759"/>
<dbReference type="PAN-GO" id="O95393">
    <property type="GO annotations" value="4 GO annotations based on evolutionary models"/>
</dbReference>
<dbReference type="PhylomeDB" id="O95393"/>
<dbReference type="TreeFam" id="TF316134"/>
<dbReference type="PathwayCommons" id="O95393"/>
<dbReference type="Reactome" id="R-HSA-201451">
    <property type="pathway name" value="Signaling by BMP"/>
</dbReference>
<dbReference type="Reactome" id="R-HSA-2129379">
    <property type="pathway name" value="Molecules associated with elastic fibres"/>
</dbReference>
<dbReference type="SignaLink" id="O95393"/>
<dbReference type="SIGNOR" id="O95393"/>
<dbReference type="BioGRID-ORCS" id="27302">
    <property type="hits" value="9 hits in 1136 CRISPR screens"/>
</dbReference>
<dbReference type="GeneWiki" id="Bone_morphogenetic_protein_10"/>
<dbReference type="GenomeRNAi" id="27302"/>
<dbReference type="Pharos" id="O95393">
    <property type="development level" value="Tbio"/>
</dbReference>
<dbReference type="PRO" id="PR:O95393"/>
<dbReference type="Proteomes" id="UP000005640">
    <property type="component" value="Chromosome 2"/>
</dbReference>
<dbReference type="RNAct" id="O95393">
    <property type="molecule type" value="protein"/>
</dbReference>
<dbReference type="Bgee" id="ENSG00000163217">
    <property type="expression patterns" value="Expressed in cardiac muscle of right atrium and 67 other cell types or tissues"/>
</dbReference>
<dbReference type="GO" id="GO:0009986">
    <property type="term" value="C:cell surface"/>
    <property type="evidence" value="ECO:0000314"/>
    <property type="project" value="BHF-UCL"/>
</dbReference>
<dbReference type="GO" id="GO:0005737">
    <property type="term" value="C:cytoplasm"/>
    <property type="evidence" value="ECO:0000314"/>
    <property type="project" value="BHF-UCL"/>
</dbReference>
<dbReference type="GO" id="GO:0005576">
    <property type="term" value="C:extracellular region"/>
    <property type="evidence" value="ECO:0000304"/>
    <property type="project" value="Reactome"/>
</dbReference>
<dbReference type="GO" id="GO:0005615">
    <property type="term" value="C:extracellular space"/>
    <property type="evidence" value="ECO:0000314"/>
    <property type="project" value="BHF-UCL"/>
</dbReference>
<dbReference type="GO" id="GO:0030018">
    <property type="term" value="C:Z disc"/>
    <property type="evidence" value="ECO:0000314"/>
    <property type="project" value="BHF-UCL"/>
</dbReference>
<dbReference type="GO" id="GO:0005125">
    <property type="term" value="F:cytokine activity"/>
    <property type="evidence" value="ECO:0000318"/>
    <property type="project" value="GO_Central"/>
</dbReference>
<dbReference type="GO" id="GO:0008083">
    <property type="term" value="F:growth factor activity"/>
    <property type="evidence" value="ECO:0000314"/>
    <property type="project" value="BHF-UCL"/>
</dbReference>
<dbReference type="GO" id="GO:0005179">
    <property type="term" value="F:hormone activity"/>
    <property type="evidence" value="ECO:0000314"/>
    <property type="project" value="BHF-UCL"/>
</dbReference>
<dbReference type="GO" id="GO:0033612">
    <property type="term" value="F:receptor serine/threonine kinase binding"/>
    <property type="evidence" value="ECO:0000314"/>
    <property type="project" value="UniProtKB"/>
</dbReference>
<dbReference type="GO" id="GO:0031433">
    <property type="term" value="F:telethonin binding"/>
    <property type="evidence" value="ECO:0000353"/>
    <property type="project" value="BHF-UCL"/>
</dbReference>
<dbReference type="GO" id="GO:0032924">
    <property type="term" value="P:activin receptor signaling pathway"/>
    <property type="evidence" value="ECO:0000314"/>
    <property type="project" value="BHF-UCL"/>
</dbReference>
<dbReference type="GO" id="GO:0007512">
    <property type="term" value="P:adult heart development"/>
    <property type="evidence" value="ECO:0000250"/>
    <property type="project" value="BHF-UCL"/>
</dbReference>
<dbReference type="GO" id="GO:0055009">
    <property type="term" value="P:atrial cardiac muscle tissue morphogenesis"/>
    <property type="evidence" value="ECO:0000250"/>
    <property type="project" value="BHF-UCL"/>
</dbReference>
<dbReference type="GO" id="GO:0030509">
    <property type="term" value="P:BMP signaling pathway"/>
    <property type="evidence" value="ECO:0000314"/>
    <property type="project" value="BHF-UCL"/>
</dbReference>
<dbReference type="GO" id="GO:0060038">
    <property type="term" value="P:cardiac muscle cell proliferation"/>
    <property type="evidence" value="ECO:0000250"/>
    <property type="project" value="UniProtKB"/>
</dbReference>
<dbReference type="GO" id="GO:0007155">
    <property type="term" value="P:cell adhesion"/>
    <property type="evidence" value="ECO:0007669"/>
    <property type="project" value="UniProtKB-KW"/>
</dbReference>
<dbReference type="GO" id="GO:0060347">
    <property type="term" value="P:heart trabecula formation"/>
    <property type="evidence" value="ECO:0000250"/>
    <property type="project" value="BHF-UCL"/>
</dbReference>
<dbReference type="GO" id="GO:0001822">
    <property type="term" value="P:kidney development"/>
    <property type="evidence" value="ECO:0007669"/>
    <property type="project" value="Ensembl"/>
</dbReference>
<dbReference type="GO" id="GO:0010614">
    <property type="term" value="P:negative regulation of cardiac muscle hypertrophy"/>
    <property type="evidence" value="ECO:0000250"/>
    <property type="project" value="BHF-UCL"/>
</dbReference>
<dbReference type="GO" id="GO:0030308">
    <property type="term" value="P:negative regulation of cell growth"/>
    <property type="evidence" value="ECO:0000314"/>
    <property type="project" value="UniProtKB"/>
</dbReference>
<dbReference type="GO" id="GO:0030336">
    <property type="term" value="P:negative regulation of cell migration"/>
    <property type="evidence" value="ECO:0000314"/>
    <property type="project" value="UniProtKB"/>
</dbReference>
<dbReference type="GO" id="GO:0010596">
    <property type="term" value="P:negative regulation of endothelial cell migration"/>
    <property type="evidence" value="ECO:0000314"/>
    <property type="project" value="BHF-UCL"/>
</dbReference>
<dbReference type="GO" id="GO:0060045">
    <property type="term" value="P:positive regulation of cardiac muscle cell proliferation"/>
    <property type="evidence" value="ECO:0000250"/>
    <property type="project" value="BHF-UCL"/>
</dbReference>
<dbReference type="GO" id="GO:0010613">
    <property type="term" value="P:positive regulation of cardiac muscle hypertrophy"/>
    <property type="evidence" value="ECO:0000315"/>
    <property type="project" value="BHF-UCL"/>
</dbReference>
<dbReference type="GO" id="GO:0061036">
    <property type="term" value="P:positive regulation of cartilage development"/>
    <property type="evidence" value="ECO:0007669"/>
    <property type="project" value="Ensembl"/>
</dbReference>
<dbReference type="GO" id="GO:2000138">
    <property type="term" value="P:positive regulation of cell proliferation involved in heart morphogenesis"/>
    <property type="evidence" value="ECO:0000250"/>
    <property type="project" value="BHF-UCL"/>
</dbReference>
<dbReference type="GO" id="GO:0045893">
    <property type="term" value="P:positive regulation of DNA-templated transcription"/>
    <property type="evidence" value="ECO:0000314"/>
    <property type="project" value="BHF-UCL"/>
</dbReference>
<dbReference type="GO" id="GO:0010628">
    <property type="term" value="P:positive regulation of gene expression"/>
    <property type="evidence" value="ECO:0007669"/>
    <property type="project" value="Ensembl"/>
</dbReference>
<dbReference type="GO" id="GO:0060298">
    <property type="term" value="P:positive regulation of sarcomere organization"/>
    <property type="evidence" value="ECO:0000314"/>
    <property type="project" value="BHF-UCL"/>
</dbReference>
<dbReference type="GO" id="GO:0060391">
    <property type="term" value="P:positive regulation of SMAD protein signal transduction"/>
    <property type="evidence" value="ECO:0000314"/>
    <property type="project" value="BHF-UCL"/>
</dbReference>
<dbReference type="GO" id="GO:0055117">
    <property type="term" value="P:regulation of cardiac muscle contraction"/>
    <property type="evidence" value="ECO:0000315"/>
    <property type="project" value="BHF-UCL"/>
</dbReference>
<dbReference type="GO" id="GO:1903242">
    <property type="term" value="P:regulation of cardiac muscle hypertrophy in response to stress"/>
    <property type="evidence" value="ECO:0000314"/>
    <property type="project" value="BHF-UCL"/>
</dbReference>
<dbReference type="GO" id="GO:0045214">
    <property type="term" value="P:sarcomere organization"/>
    <property type="evidence" value="ECO:0000250"/>
    <property type="project" value="BHF-UCL"/>
</dbReference>
<dbReference type="GO" id="GO:0055015">
    <property type="term" value="P:ventricular cardiac muscle cell development"/>
    <property type="evidence" value="ECO:0000250"/>
    <property type="project" value="BHF-UCL"/>
</dbReference>
<dbReference type="GO" id="GO:0055010">
    <property type="term" value="P:ventricular cardiac muscle tissue morphogenesis"/>
    <property type="evidence" value="ECO:0000250"/>
    <property type="project" value="BHF-UCL"/>
</dbReference>
<dbReference type="CDD" id="cd19401">
    <property type="entry name" value="TGF_beta_BMP10"/>
    <property type="match status" value="1"/>
</dbReference>
<dbReference type="FunFam" id="2.60.120.970:FF:000013">
    <property type="entry name" value="Bone morphogenetic protein 10"/>
    <property type="match status" value="1"/>
</dbReference>
<dbReference type="FunFam" id="2.10.90.10:FF:000001">
    <property type="entry name" value="Bone morphogenetic protein 4"/>
    <property type="match status" value="1"/>
</dbReference>
<dbReference type="Gene3D" id="2.60.120.970">
    <property type="match status" value="1"/>
</dbReference>
<dbReference type="Gene3D" id="2.10.90.10">
    <property type="entry name" value="Cystine-knot cytokines"/>
    <property type="match status" value="1"/>
</dbReference>
<dbReference type="InterPro" id="IPR029034">
    <property type="entry name" value="Cystine-knot_cytokine"/>
</dbReference>
<dbReference type="InterPro" id="IPR001839">
    <property type="entry name" value="TGF-b_C"/>
</dbReference>
<dbReference type="InterPro" id="IPR001111">
    <property type="entry name" value="TGF-b_propeptide"/>
</dbReference>
<dbReference type="InterPro" id="IPR015615">
    <property type="entry name" value="TGF-beta-rel"/>
</dbReference>
<dbReference type="InterPro" id="IPR017948">
    <property type="entry name" value="TGFb_CS"/>
</dbReference>
<dbReference type="PANTHER" id="PTHR11848:SF39">
    <property type="entry name" value="BONE MORPHOGENETIC PROTEIN 10"/>
    <property type="match status" value="1"/>
</dbReference>
<dbReference type="PANTHER" id="PTHR11848">
    <property type="entry name" value="TGF-BETA FAMILY"/>
    <property type="match status" value="1"/>
</dbReference>
<dbReference type="Pfam" id="PF00019">
    <property type="entry name" value="TGF_beta"/>
    <property type="match status" value="1"/>
</dbReference>
<dbReference type="Pfam" id="PF00688">
    <property type="entry name" value="TGFb_propeptide"/>
    <property type="match status" value="1"/>
</dbReference>
<dbReference type="PRINTS" id="PR00669">
    <property type="entry name" value="INHIBINA"/>
</dbReference>
<dbReference type="SMART" id="SM00204">
    <property type="entry name" value="TGFB"/>
    <property type="match status" value="1"/>
</dbReference>
<dbReference type="SUPFAM" id="SSF57501">
    <property type="entry name" value="Cystine-knot cytokines"/>
    <property type="match status" value="1"/>
</dbReference>
<dbReference type="PROSITE" id="PS00250">
    <property type="entry name" value="TGF_BETA_1"/>
    <property type="match status" value="1"/>
</dbReference>
<dbReference type="PROSITE" id="PS51362">
    <property type="entry name" value="TGF_BETA_2"/>
    <property type="match status" value="1"/>
</dbReference>
<accession>O95393</accession>
<accession>Q53R17</accession>
<accession>Q6NTE0</accession>
<organism>
    <name type="scientific">Homo sapiens</name>
    <name type="common">Human</name>
    <dbReference type="NCBI Taxonomy" id="9606"/>
    <lineage>
        <taxon>Eukaryota</taxon>
        <taxon>Metazoa</taxon>
        <taxon>Chordata</taxon>
        <taxon>Craniata</taxon>
        <taxon>Vertebrata</taxon>
        <taxon>Euteleostomi</taxon>
        <taxon>Mammalia</taxon>
        <taxon>Eutheria</taxon>
        <taxon>Euarchontoglires</taxon>
        <taxon>Primates</taxon>
        <taxon>Haplorrhini</taxon>
        <taxon>Catarrhini</taxon>
        <taxon>Hominidae</taxon>
        <taxon>Homo</taxon>
    </lineage>
</organism>